<feature type="chain" id="PRO_1000055171" description="ATP synthase subunit beta">
    <location>
        <begin position="1"/>
        <end position="468"/>
    </location>
</feature>
<feature type="binding site" evidence="1">
    <location>
        <begin position="155"/>
        <end position="162"/>
    </location>
    <ligand>
        <name>ATP</name>
        <dbReference type="ChEBI" id="CHEBI:30616"/>
    </ligand>
</feature>
<keyword id="KW-0066">ATP synthesis</keyword>
<keyword id="KW-0067">ATP-binding</keyword>
<keyword id="KW-1003">Cell membrane</keyword>
<keyword id="KW-0139">CF(1)</keyword>
<keyword id="KW-0375">Hydrogen ion transport</keyword>
<keyword id="KW-0406">Ion transport</keyword>
<keyword id="KW-0472">Membrane</keyword>
<keyword id="KW-0547">Nucleotide-binding</keyword>
<keyword id="KW-1185">Reference proteome</keyword>
<keyword id="KW-1278">Translocase</keyword>
<keyword id="KW-0813">Transport</keyword>
<proteinExistence type="inferred from homology"/>
<comment type="function">
    <text evidence="1">Produces ATP from ADP in the presence of a proton gradient across the membrane. The catalytic sites are hosted primarily by the beta subunits.</text>
</comment>
<comment type="catalytic activity">
    <reaction evidence="1">
        <text>ATP + H2O + 4 H(+)(in) = ADP + phosphate + 5 H(+)(out)</text>
        <dbReference type="Rhea" id="RHEA:57720"/>
        <dbReference type="ChEBI" id="CHEBI:15377"/>
        <dbReference type="ChEBI" id="CHEBI:15378"/>
        <dbReference type="ChEBI" id="CHEBI:30616"/>
        <dbReference type="ChEBI" id="CHEBI:43474"/>
        <dbReference type="ChEBI" id="CHEBI:456216"/>
        <dbReference type="EC" id="7.1.2.2"/>
    </reaction>
</comment>
<comment type="subunit">
    <text evidence="1">F-type ATPases have 2 components, CF(1) - the catalytic core - and CF(0) - the membrane proton channel. CF(1) has five subunits: alpha(3), beta(3), gamma(1), delta(1), epsilon(1). CF(0) has three main subunits: a(1), b(2) and c(9-12). The alpha and beta chains form an alternating ring which encloses part of the gamma chain. CF(1) is attached to CF(0) by a central stalk formed by the gamma and epsilon chains, while a peripheral stalk is formed by the delta and b chains.</text>
</comment>
<comment type="subcellular location">
    <subcellularLocation>
        <location evidence="1">Cell membrane</location>
        <topology evidence="1">Peripheral membrane protein</topology>
    </subcellularLocation>
</comment>
<comment type="similarity">
    <text evidence="1">Belongs to the ATPase alpha/beta chains family.</text>
</comment>
<accession>A3CM14</accession>
<dbReference type="EC" id="7.1.2.2" evidence="1"/>
<dbReference type="EMBL" id="CP000387">
    <property type="protein sequence ID" value="ABN44219.1"/>
    <property type="molecule type" value="Genomic_DNA"/>
</dbReference>
<dbReference type="RefSeq" id="WP_002897903.1">
    <property type="nucleotide sequence ID" value="NC_009009.1"/>
</dbReference>
<dbReference type="RefSeq" id="YP_001034769.1">
    <property type="nucleotide sequence ID" value="NC_009009.1"/>
</dbReference>
<dbReference type="SMR" id="A3CM14"/>
<dbReference type="STRING" id="388919.SSA_0788"/>
<dbReference type="GeneID" id="48425199"/>
<dbReference type="KEGG" id="ssa:SSA_0788"/>
<dbReference type="PATRIC" id="fig|388919.9.peg.754"/>
<dbReference type="eggNOG" id="COG0055">
    <property type="taxonomic scope" value="Bacteria"/>
</dbReference>
<dbReference type="HOGENOM" id="CLU_022398_0_2_9"/>
<dbReference type="OrthoDB" id="9801639at2"/>
<dbReference type="Proteomes" id="UP000002148">
    <property type="component" value="Chromosome"/>
</dbReference>
<dbReference type="GO" id="GO:0005886">
    <property type="term" value="C:plasma membrane"/>
    <property type="evidence" value="ECO:0007669"/>
    <property type="project" value="UniProtKB-SubCell"/>
</dbReference>
<dbReference type="GO" id="GO:0045259">
    <property type="term" value="C:proton-transporting ATP synthase complex"/>
    <property type="evidence" value="ECO:0007669"/>
    <property type="project" value="UniProtKB-KW"/>
</dbReference>
<dbReference type="GO" id="GO:0005524">
    <property type="term" value="F:ATP binding"/>
    <property type="evidence" value="ECO:0007669"/>
    <property type="project" value="UniProtKB-UniRule"/>
</dbReference>
<dbReference type="GO" id="GO:0016887">
    <property type="term" value="F:ATP hydrolysis activity"/>
    <property type="evidence" value="ECO:0007669"/>
    <property type="project" value="InterPro"/>
</dbReference>
<dbReference type="GO" id="GO:0046933">
    <property type="term" value="F:proton-transporting ATP synthase activity, rotational mechanism"/>
    <property type="evidence" value="ECO:0007669"/>
    <property type="project" value="UniProtKB-UniRule"/>
</dbReference>
<dbReference type="CDD" id="cd18110">
    <property type="entry name" value="ATP-synt_F1_beta_C"/>
    <property type="match status" value="1"/>
</dbReference>
<dbReference type="CDD" id="cd18115">
    <property type="entry name" value="ATP-synt_F1_beta_N"/>
    <property type="match status" value="1"/>
</dbReference>
<dbReference type="CDD" id="cd01133">
    <property type="entry name" value="F1-ATPase_beta_CD"/>
    <property type="match status" value="1"/>
</dbReference>
<dbReference type="FunFam" id="1.10.1140.10:FF:000001">
    <property type="entry name" value="ATP synthase subunit beta"/>
    <property type="match status" value="1"/>
</dbReference>
<dbReference type="FunFam" id="2.40.10.170:FF:000005">
    <property type="entry name" value="ATP synthase subunit beta"/>
    <property type="match status" value="1"/>
</dbReference>
<dbReference type="FunFam" id="3.40.50.300:FF:000004">
    <property type="entry name" value="ATP synthase subunit beta"/>
    <property type="match status" value="1"/>
</dbReference>
<dbReference type="Gene3D" id="2.40.10.170">
    <property type="match status" value="1"/>
</dbReference>
<dbReference type="Gene3D" id="1.10.1140.10">
    <property type="entry name" value="Bovine Mitochondrial F1-atpase, Atp Synthase Beta Chain, Chain D, domain 3"/>
    <property type="match status" value="1"/>
</dbReference>
<dbReference type="Gene3D" id="3.40.50.300">
    <property type="entry name" value="P-loop containing nucleotide triphosphate hydrolases"/>
    <property type="match status" value="1"/>
</dbReference>
<dbReference type="HAMAP" id="MF_01347">
    <property type="entry name" value="ATP_synth_beta_bact"/>
    <property type="match status" value="1"/>
</dbReference>
<dbReference type="InterPro" id="IPR003593">
    <property type="entry name" value="AAA+_ATPase"/>
</dbReference>
<dbReference type="InterPro" id="IPR055190">
    <property type="entry name" value="ATP-synt_VA_C"/>
</dbReference>
<dbReference type="InterPro" id="IPR005722">
    <property type="entry name" value="ATP_synth_F1_bsu"/>
</dbReference>
<dbReference type="InterPro" id="IPR020003">
    <property type="entry name" value="ATPase_a/bsu_AS"/>
</dbReference>
<dbReference type="InterPro" id="IPR050053">
    <property type="entry name" value="ATPase_alpha/beta_chains"/>
</dbReference>
<dbReference type="InterPro" id="IPR004100">
    <property type="entry name" value="ATPase_F1/V1/A1_a/bsu_N"/>
</dbReference>
<dbReference type="InterPro" id="IPR036121">
    <property type="entry name" value="ATPase_F1/V1/A1_a/bsu_N_sf"/>
</dbReference>
<dbReference type="InterPro" id="IPR000194">
    <property type="entry name" value="ATPase_F1/V1/A1_a/bsu_nucl-bd"/>
</dbReference>
<dbReference type="InterPro" id="IPR024034">
    <property type="entry name" value="ATPase_F1/V1_b/a_C"/>
</dbReference>
<dbReference type="InterPro" id="IPR027417">
    <property type="entry name" value="P-loop_NTPase"/>
</dbReference>
<dbReference type="NCBIfam" id="TIGR01039">
    <property type="entry name" value="atpD"/>
    <property type="match status" value="1"/>
</dbReference>
<dbReference type="PANTHER" id="PTHR15184">
    <property type="entry name" value="ATP SYNTHASE"/>
    <property type="match status" value="1"/>
</dbReference>
<dbReference type="PANTHER" id="PTHR15184:SF71">
    <property type="entry name" value="ATP SYNTHASE SUBUNIT BETA, MITOCHONDRIAL"/>
    <property type="match status" value="1"/>
</dbReference>
<dbReference type="Pfam" id="PF00006">
    <property type="entry name" value="ATP-synt_ab"/>
    <property type="match status" value="1"/>
</dbReference>
<dbReference type="Pfam" id="PF02874">
    <property type="entry name" value="ATP-synt_ab_N"/>
    <property type="match status" value="1"/>
</dbReference>
<dbReference type="Pfam" id="PF22919">
    <property type="entry name" value="ATP-synt_VA_C"/>
    <property type="match status" value="1"/>
</dbReference>
<dbReference type="SMART" id="SM00382">
    <property type="entry name" value="AAA"/>
    <property type="match status" value="1"/>
</dbReference>
<dbReference type="SUPFAM" id="SSF47917">
    <property type="entry name" value="C-terminal domain of alpha and beta subunits of F1 ATP synthase"/>
    <property type="match status" value="1"/>
</dbReference>
<dbReference type="SUPFAM" id="SSF50615">
    <property type="entry name" value="N-terminal domain of alpha and beta subunits of F1 ATP synthase"/>
    <property type="match status" value="1"/>
</dbReference>
<dbReference type="SUPFAM" id="SSF52540">
    <property type="entry name" value="P-loop containing nucleoside triphosphate hydrolases"/>
    <property type="match status" value="1"/>
</dbReference>
<dbReference type="PROSITE" id="PS00152">
    <property type="entry name" value="ATPASE_ALPHA_BETA"/>
    <property type="match status" value="1"/>
</dbReference>
<name>ATPB_STRSV</name>
<evidence type="ECO:0000255" key="1">
    <source>
        <dbReference type="HAMAP-Rule" id="MF_01347"/>
    </source>
</evidence>
<organism>
    <name type="scientific">Streptococcus sanguinis (strain SK36)</name>
    <dbReference type="NCBI Taxonomy" id="388919"/>
    <lineage>
        <taxon>Bacteria</taxon>
        <taxon>Bacillati</taxon>
        <taxon>Bacillota</taxon>
        <taxon>Bacilli</taxon>
        <taxon>Lactobacillales</taxon>
        <taxon>Streptococcaceae</taxon>
        <taxon>Streptococcus</taxon>
    </lineage>
</organism>
<gene>
    <name evidence="1" type="primary">atpD</name>
    <name type="ordered locus">SSA_0788</name>
</gene>
<protein>
    <recommendedName>
        <fullName evidence="1">ATP synthase subunit beta</fullName>
        <ecNumber evidence="1">7.1.2.2</ecNumber>
    </recommendedName>
    <alternativeName>
        <fullName evidence="1">ATP synthase F1 sector subunit beta</fullName>
    </alternativeName>
    <alternativeName>
        <fullName evidence="1">F-ATPase subunit beta</fullName>
    </alternativeName>
</protein>
<sequence>MSSGKIAQVIGPVVDVAFAAGDKLPEINNALVVYKNDEKKSKIVLEVALELGDGVVRTIAMESTDGLTRGLEVLDTGRPISVPVGKETLGRVFNVLGDTIDLDAPFPADAERQPIHKKAPTFDELSTSSEILETGIKVIDLLAPYLKGGKVGLFGGAGVGKTVLIQELIHNIAQEHGGISVFTGVGERTREGNDLYWEMKESGVIEKTAMVFGQMNEPPGARMRVALTGLTIAEYFRDVEGQDVLLFIDNIFRFTQAGSEVSALLGRMPSAVGYQPTLATEMGQLQERITSTKKGSVTSIQAIYVPADDYTDPAPATAFAHLDSTTNLERKLVQLGIYPAVDPLASSSRALSPEIVGEEHYAVAAEVKRVLQRYHELQDIIAILGMDELSDDEKTLVARARRIQFFLSQNFNVAEQFTGQPGSYVPVAETVRGFKEILEGKHDKLPEDAFRGVGSIEDVLAKAEKMGF</sequence>
<reference key="1">
    <citation type="journal article" date="2007" name="J. Bacteriol.">
        <title>Genome of the opportunistic pathogen Streptococcus sanguinis.</title>
        <authorList>
            <person name="Xu P."/>
            <person name="Alves J.M."/>
            <person name="Kitten T."/>
            <person name="Brown A."/>
            <person name="Chen Z."/>
            <person name="Ozaki L.S."/>
            <person name="Manque P."/>
            <person name="Ge X."/>
            <person name="Serrano M.G."/>
            <person name="Puiu D."/>
            <person name="Hendricks S."/>
            <person name="Wang Y."/>
            <person name="Chaplin M.D."/>
            <person name="Akan D."/>
            <person name="Paik S."/>
            <person name="Peterson D.L."/>
            <person name="Macrina F.L."/>
            <person name="Buck G.A."/>
        </authorList>
    </citation>
    <scope>NUCLEOTIDE SEQUENCE [LARGE SCALE GENOMIC DNA]</scope>
    <source>
        <strain>SK36</strain>
    </source>
</reference>